<gene>
    <name evidence="1" type="primary">ubiA</name>
    <name type="ordered locus">ECH74115_5521</name>
</gene>
<name>UBIA_ECO5E</name>
<feature type="chain" id="PRO_1000186666" description="4-hydroxybenzoate octaprenyltransferase">
    <location>
        <begin position="1"/>
        <end position="290"/>
    </location>
</feature>
<feature type="transmembrane region" description="Helical" evidence="1">
    <location>
        <begin position="23"/>
        <end position="43"/>
    </location>
</feature>
<feature type="transmembrane region" description="Helical" evidence="1">
    <location>
        <begin position="46"/>
        <end position="66"/>
    </location>
</feature>
<feature type="transmembrane region" description="Helical" evidence="1">
    <location>
        <begin position="99"/>
        <end position="119"/>
    </location>
</feature>
<feature type="transmembrane region" description="Helical" evidence="1">
    <location>
        <begin position="141"/>
        <end position="161"/>
    </location>
</feature>
<feature type="transmembrane region" description="Helical" evidence="1">
    <location>
        <begin position="163"/>
        <end position="183"/>
    </location>
</feature>
<feature type="transmembrane region" description="Helical" evidence="1">
    <location>
        <begin position="213"/>
        <end position="233"/>
    </location>
</feature>
<feature type="transmembrane region" description="Helical" evidence="1">
    <location>
        <begin position="234"/>
        <end position="254"/>
    </location>
</feature>
<feature type="transmembrane region" description="Helical" evidence="1">
    <location>
        <begin position="268"/>
        <end position="288"/>
    </location>
</feature>
<dbReference type="EC" id="2.5.1.39" evidence="1"/>
<dbReference type="EMBL" id="CP001164">
    <property type="protein sequence ID" value="ACI38195.1"/>
    <property type="molecule type" value="Genomic_DNA"/>
</dbReference>
<dbReference type="RefSeq" id="WP_000455227.1">
    <property type="nucleotide sequence ID" value="NC_011353.1"/>
</dbReference>
<dbReference type="SMR" id="B5Z181"/>
<dbReference type="GeneID" id="93777791"/>
<dbReference type="KEGG" id="ecf:ECH74115_5521"/>
<dbReference type="HOGENOM" id="CLU_034879_1_0_6"/>
<dbReference type="UniPathway" id="UPA00232"/>
<dbReference type="GO" id="GO:0005886">
    <property type="term" value="C:plasma membrane"/>
    <property type="evidence" value="ECO:0007669"/>
    <property type="project" value="UniProtKB-SubCell"/>
</dbReference>
<dbReference type="GO" id="GO:0008412">
    <property type="term" value="F:4-hydroxybenzoate polyprenyltransferase activity"/>
    <property type="evidence" value="ECO:0007669"/>
    <property type="project" value="UniProtKB-UniRule"/>
</dbReference>
<dbReference type="GO" id="GO:0006744">
    <property type="term" value="P:ubiquinone biosynthetic process"/>
    <property type="evidence" value="ECO:0007669"/>
    <property type="project" value="UniProtKB-UniRule"/>
</dbReference>
<dbReference type="CDD" id="cd13959">
    <property type="entry name" value="PT_UbiA_COQ2"/>
    <property type="match status" value="1"/>
</dbReference>
<dbReference type="FunFam" id="1.10.357.140:FF:000002">
    <property type="entry name" value="4-hydroxybenzoate octaprenyltransferase"/>
    <property type="match status" value="1"/>
</dbReference>
<dbReference type="FunFam" id="1.20.120.1780:FF:000001">
    <property type="entry name" value="4-hydroxybenzoate octaprenyltransferase"/>
    <property type="match status" value="1"/>
</dbReference>
<dbReference type="Gene3D" id="1.10.357.140">
    <property type="entry name" value="UbiA prenyltransferase"/>
    <property type="match status" value="1"/>
</dbReference>
<dbReference type="Gene3D" id="1.20.120.1780">
    <property type="entry name" value="UbiA prenyltransferase"/>
    <property type="match status" value="1"/>
</dbReference>
<dbReference type="HAMAP" id="MF_01635">
    <property type="entry name" value="UbiA"/>
    <property type="match status" value="1"/>
</dbReference>
<dbReference type="InterPro" id="IPR006370">
    <property type="entry name" value="HB_polyprenyltransferase-like"/>
</dbReference>
<dbReference type="InterPro" id="IPR039653">
    <property type="entry name" value="Prenyltransferase"/>
</dbReference>
<dbReference type="InterPro" id="IPR000537">
    <property type="entry name" value="UbiA_prenyltransferase"/>
</dbReference>
<dbReference type="InterPro" id="IPR030470">
    <property type="entry name" value="UbiA_prenylTrfase_CS"/>
</dbReference>
<dbReference type="InterPro" id="IPR044878">
    <property type="entry name" value="UbiA_sf"/>
</dbReference>
<dbReference type="NCBIfam" id="TIGR01474">
    <property type="entry name" value="ubiA_proteo"/>
    <property type="match status" value="1"/>
</dbReference>
<dbReference type="PANTHER" id="PTHR11048:SF28">
    <property type="entry name" value="4-HYDROXYBENZOATE POLYPRENYLTRANSFERASE, MITOCHONDRIAL"/>
    <property type="match status" value="1"/>
</dbReference>
<dbReference type="PANTHER" id="PTHR11048">
    <property type="entry name" value="PRENYLTRANSFERASES"/>
    <property type="match status" value="1"/>
</dbReference>
<dbReference type="Pfam" id="PF01040">
    <property type="entry name" value="UbiA"/>
    <property type="match status" value="1"/>
</dbReference>
<dbReference type="PROSITE" id="PS00943">
    <property type="entry name" value="UBIA"/>
    <property type="match status" value="1"/>
</dbReference>
<protein>
    <recommendedName>
        <fullName evidence="1">4-hydroxybenzoate octaprenyltransferase</fullName>
        <ecNumber evidence="1">2.5.1.39</ecNumber>
    </recommendedName>
    <alternativeName>
        <fullName evidence="1">4-HB polyprenyltransferase</fullName>
    </alternativeName>
</protein>
<keyword id="KW-0997">Cell inner membrane</keyword>
<keyword id="KW-1003">Cell membrane</keyword>
<keyword id="KW-0460">Magnesium</keyword>
<keyword id="KW-0472">Membrane</keyword>
<keyword id="KW-0808">Transferase</keyword>
<keyword id="KW-0812">Transmembrane</keyword>
<keyword id="KW-1133">Transmembrane helix</keyword>
<keyword id="KW-0831">Ubiquinone biosynthesis</keyword>
<organism>
    <name type="scientific">Escherichia coli O157:H7 (strain EC4115 / EHEC)</name>
    <dbReference type="NCBI Taxonomy" id="444450"/>
    <lineage>
        <taxon>Bacteria</taxon>
        <taxon>Pseudomonadati</taxon>
        <taxon>Pseudomonadota</taxon>
        <taxon>Gammaproteobacteria</taxon>
        <taxon>Enterobacterales</taxon>
        <taxon>Enterobacteriaceae</taxon>
        <taxon>Escherichia</taxon>
    </lineage>
</organism>
<sequence length="290" mass="32512">MEWSLTQNKLLAFHRLMRTDKPIGALLLLWPTLWALWVATPGVPQLWILAVFVAGVWLMRAAGCVVNDYADRKFDGHVKRTANRPLPSGAVTEKEARALFVVLVLISFLLVLTLNTMTILLSIAALALAWVYPFMKRYTHLPQVVLGAAFGWSIPMAFAAVSESVPLSCWLMFLANILWAVAYDTQYAMVDRDDDVKIGIKSTAILFGQYDKLIIGILQIGVLALMAIIGELNGLGWGYYWSILVAGALFVYQQKLIANREREACFKAFMNNNYVGLVLFLGLAMSYWHF</sequence>
<evidence type="ECO:0000255" key="1">
    <source>
        <dbReference type="HAMAP-Rule" id="MF_01635"/>
    </source>
</evidence>
<accession>B5Z181</accession>
<proteinExistence type="inferred from homology"/>
<reference key="1">
    <citation type="journal article" date="2011" name="Proc. Natl. Acad. Sci. U.S.A.">
        <title>Genomic anatomy of Escherichia coli O157:H7 outbreaks.</title>
        <authorList>
            <person name="Eppinger M."/>
            <person name="Mammel M.K."/>
            <person name="Leclerc J.E."/>
            <person name="Ravel J."/>
            <person name="Cebula T.A."/>
        </authorList>
    </citation>
    <scope>NUCLEOTIDE SEQUENCE [LARGE SCALE GENOMIC DNA]</scope>
    <source>
        <strain>EC4115 / EHEC</strain>
    </source>
</reference>
<comment type="function">
    <text evidence="1">Catalyzes the prenylation of para-hydroxybenzoate (PHB) with an all-trans polyprenyl group. Mediates the second step in the final reaction sequence of ubiquinone-8 (UQ-8) biosynthesis, which is the condensation of the polyisoprenoid side chain with PHB, generating the first membrane-bound Q intermediate 3-octaprenyl-4-hydroxybenzoate.</text>
</comment>
<comment type="catalytic activity">
    <reaction evidence="1">
        <text>all-trans-octaprenyl diphosphate + 4-hydroxybenzoate = 4-hydroxy-3-(all-trans-octaprenyl)benzoate + diphosphate</text>
        <dbReference type="Rhea" id="RHEA:27782"/>
        <dbReference type="ChEBI" id="CHEBI:1617"/>
        <dbReference type="ChEBI" id="CHEBI:17879"/>
        <dbReference type="ChEBI" id="CHEBI:33019"/>
        <dbReference type="ChEBI" id="CHEBI:57711"/>
        <dbReference type="EC" id="2.5.1.39"/>
    </reaction>
</comment>
<comment type="cofactor">
    <cofactor evidence="1">
        <name>Mg(2+)</name>
        <dbReference type="ChEBI" id="CHEBI:18420"/>
    </cofactor>
</comment>
<comment type="pathway">
    <text evidence="1">Cofactor biosynthesis; ubiquinone biosynthesis.</text>
</comment>
<comment type="subcellular location">
    <subcellularLocation>
        <location evidence="1">Cell inner membrane</location>
        <topology evidence="1">Multi-pass membrane protein</topology>
    </subcellularLocation>
</comment>
<comment type="similarity">
    <text evidence="1">Belongs to the UbiA prenyltransferase family.</text>
</comment>